<feature type="chain" id="PRO_0000146508" description="Small ribosomal subunit protein uS10">
    <location>
        <begin position="1"/>
        <end position="102"/>
    </location>
</feature>
<gene>
    <name evidence="1" type="primary">rpsJ</name>
    <name type="ordered locus">BR1234</name>
    <name type="ordered locus">BS1330_I1230</name>
</gene>
<evidence type="ECO:0000255" key="1">
    <source>
        <dbReference type="HAMAP-Rule" id="MF_00508"/>
    </source>
</evidence>
<evidence type="ECO:0000305" key="2"/>
<keyword id="KW-0687">Ribonucleoprotein</keyword>
<keyword id="KW-0689">Ribosomal protein</keyword>
<protein>
    <recommendedName>
        <fullName evidence="1">Small ribosomal subunit protein uS10</fullName>
    </recommendedName>
    <alternativeName>
        <fullName evidence="2">30S ribosomal protein S10</fullName>
    </alternativeName>
</protein>
<comment type="function">
    <text evidence="1">Involved in the binding of tRNA to the ribosomes.</text>
</comment>
<comment type="subunit">
    <text evidence="1">Part of the 30S ribosomal subunit.</text>
</comment>
<comment type="similarity">
    <text evidence="1">Belongs to the universal ribosomal protein uS10 family.</text>
</comment>
<organism>
    <name type="scientific">Brucella suis biovar 1 (strain 1330)</name>
    <dbReference type="NCBI Taxonomy" id="204722"/>
    <lineage>
        <taxon>Bacteria</taxon>
        <taxon>Pseudomonadati</taxon>
        <taxon>Pseudomonadota</taxon>
        <taxon>Alphaproteobacteria</taxon>
        <taxon>Hyphomicrobiales</taxon>
        <taxon>Brucellaceae</taxon>
        <taxon>Brucella/Ochrobactrum group</taxon>
        <taxon>Brucella</taxon>
    </lineage>
</organism>
<dbReference type="EMBL" id="AE014291">
    <property type="protein sequence ID" value="AAN30153.1"/>
    <property type="molecule type" value="Genomic_DNA"/>
</dbReference>
<dbReference type="EMBL" id="CP002997">
    <property type="protein sequence ID" value="AEM18571.1"/>
    <property type="molecule type" value="Genomic_DNA"/>
</dbReference>
<dbReference type="RefSeq" id="WP_002964363.1">
    <property type="nucleotide sequence ID" value="NZ_KN046804.1"/>
</dbReference>
<dbReference type="SMR" id="P66325"/>
<dbReference type="GeneID" id="97533523"/>
<dbReference type="KEGG" id="bms:BR1234"/>
<dbReference type="KEGG" id="bsi:BS1330_I1230"/>
<dbReference type="PATRIC" id="fig|204722.21.peg.2242"/>
<dbReference type="HOGENOM" id="CLU_122625_1_3_5"/>
<dbReference type="PhylomeDB" id="P66325"/>
<dbReference type="Proteomes" id="UP000007104">
    <property type="component" value="Chromosome I"/>
</dbReference>
<dbReference type="GO" id="GO:1990904">
    <property type="term" value="C:ribonucleoprotein complex"/>
    <property type="evidence" value="ECO:0007669"/>
    <property type="project" value="UniProtKB-KW"/>
</dbReference>
<dbReference type="GO" id="GO:0005840">
    <property type="term" value="C:ribosome"/>
    <property type="evidence" value="ECO:0007669"/>
    <property type="project" value="UniProtKB-KW"/>
</dbReference>
<dbReference type="GO" id="GO:0003735">
    <property type="term" value="F:structural constituent of ribosome"/>
    <property type="evidence" value="ECO:0007669"/>
    <property type="project" value="InterPro"/>
</dbReference>
<dbReference type="GO" id="GO:0000049">
    <property type="term" value="F:tRNA binding"/>
    <property type="evidence" value="ECO:0007669"/>
    <property type="project" value="UniProtKB-UniRule"/>
</dbReference>
<dbReference type="GO" id="GO:0006412">
    <property type="term" value="P:translation"/>
    <property type="evidence" value="ECO:0007669"/>
    <property type="project" value="UniProtKB-UniRule"/>
</dbReference>
<dbReference type="FunFam" id="3.30.70.600:FF:000001">
    <property type="entry name" value="30S ribosomal protein S10"/>
    <property type="match status" value="1"/>
</dbReference>
<dbReference type="Gene3D" id="3.30.70.600">
    <property type="entry name" value="Ribosomal protein S10 domain"/>
    <property type="match status" value="1"/>
</dbReference>
<dbReference type="HAMAP" id="MF_00508">
    <property type="entry name" value="Ribosomal_uS10"/>
    <property type="match status" value="1"/>
</dbReference>
<dbReference type="InterPro" id="IPR001848">
    <property type="entry name" value="Ribosomal_uS10"/>
</dbReference>
<dbReference type="InterPro" id="IPR018268">
    <property type="entry name" value="Ribosomal_uS10_CS"/>
</dbReference>
<dbReference type="InterPro" id="IPR027486">
    <property type="entry name" value="Ribosomal_uS10_dom"/>
</dbReference>
<dbReference type="InterPro" id="IPR036838">
    <property type="entry name" value="Ribosomal_uS10_dom_sf"/>
</dbReference>
<dbReference type="NCBIfam" id="NF001861">
    <property type="entry name" value="PRK00596.1"/>
    <property type="match status" value="1"/>
</dbReference>
<dbReference type="NCBIfam" id="TIGR01049">
    <property type="entry name" value="rpsJ_bact"/>
    <property type="match status" value="1"/>
</dbReference>
<dbReference type="PANTHER" id="PTHR11700">
    <property type="entry name" value="30S RIBOSOMAL PROTEIN S10 FAMILY MEMBER"/>
    <property type="match status" value="1"/>
</dbReference>
<dbReference type="Pfam" id="PF00338">
    <property type="entry name" value="Ribosomal_S10"/>
    <property type="match status" value="1"/>
</dbReference>
<dbReference type="PRINTS" id="PR00971">
    <property type="entry name" value="RIBOSOMALS10"/>
</dbReference>
<dbReference type="SMART" id="SM01403">
    <property type="entry name" value="Ribosomal_S10"/>
    <property type="match status" value="1"/>
</dbReference>
<dbReference type="SUPFAM" id="SSF54999">
    <property type="entry name" value="Ribosomal protein S10"/>
    <property type="match status" value="1"/>
</dbReference>
<dbReference type="PROSITE" id="PS00361">
    <property type="entry name" value="RIBOSOMAL_S10"/>
    <property type="match status" value="1"/>
</dbReference>
<reference key="1">
    <citation type="journal article" date="2002" name="Proc. Natl. Acad. Sci. U.S.A.">
        <title>The Brucella suis genome reveals fundamental similarities between animal and plant pathogens and symbionts.</title>
        <authorList>
            <person name="Paulsen I.T."/>
            <person name="Seshadri R."/>
            <person name="Nelson K.E."/>
            <person name="Eisen J.A."/>
            <person name="Heidelberg J.F."/>
            <person name="Read T.D."/>
            <person name="Dodson R.J."/>
            <person name="Umayam L.A."/>
            <person name="Brinkac L.M."/>
            <person name="Beanan M.J."/>
            <person name="Daugherty S.C."/>
            <person name="DeBoy R.T."/>
            <person name="Durkin A.S."/>
            <person name="Kolonay J.F."/>
            <person name="Madupu R."/>
            <person name="Nelson W.C."/>
            <person name="Ayodeji B."/>
            <person name="Kraul M."/>
            <person name="Shetty J."/>
            <person name="Malek J.A."/>
            <person name="Van Aken S.E."/>
            <person name="Riedmuller S."/>
            <person name="Tettelin H."/>
            <person name="Gill S.R."/>
            <person name="White O."/>
            <person name="Salzberg S.L."/>
            <person name="Hoover D.L."/>
            <person name="Lindler L.E."/>
            <person name="Halling S.M."/>
            <person name="Boyle S.M."/>
            <person name="Fraser C.M."/>
        </authorList>
    </citation>
    <scope>NUCLEOTIDE SEQUENCE [LARGE SCALE GENOMIC DNA]</scope>
    <source>
        <strain>1330</strain>
    </source>
</reference>
<reference key="2">
    <citation type="journal article" date="2011" name="J. Bacteriol.">
        <title>Revised genome sequence of Brucella suis 1330.</title>
        <authorList>
            <person name="Tae H."/>
            <person name="Shallom S."/>
            <person name="Settlage R."/>
            <person name="Preston D."/>
            <person name="Adams L.G."/>
            <person name="Garner H.R."/>
        </authorList>
    </citation>
    <scope>NUCLEOTIDE SEQUENCE [LARGE SCALE GENOMIC DNA]</scope>
    <source>
        <strain>1330</strain>
    </source>
</reference>
<sequence>MNGQNIRIRLKAFDHRILDASTREIVSTAKRTGANVRGPIPLPTRIEKFTVNRSPHIDKKSREQFEMRTHKRLLDIVDPTPQTVDALMKLDLSAGVDVEIKL</sequence>
<name>RS10_BRUSU</name>
<proteinExistence type="inferred from homology"/>
<accession>P66325</accession>
<accession>G0KAF5</accession>
<accession>Q8YHP1</accession>